<dbReference type="EMBL" id="CP000308">
    <property type="protein sequence ID" value="ABG12197.1"/>
    <property type="molecule type" value="Genomic_DNA"/>
</dbReference>
<dbReference type="RefSeq" id="WP_002211520.1">
    <property type="nucleotide sequence ID" value="NZ_CP009906.1"/>
</dbReference>
<dbReference type="SMR" id="Q1CBH5"/>
<dbReference type="GeneID" id="57974912"/>
<dbReference type="KEGG" id="ypa:YPA_0228"/>
<dbReference type="Proteomes" id="UP000001971">
    <property type="component" value="Chromosome"/>
</dbReference>
<dbReference type="GO" id="GO:0030313">
    <property type="term" value="C:cell envelope"/>
    <property type="evidence" value="ECO:0007669"/>
    <property type="project" value="UniProtKB-ARBA"/>
</dbReference>
<dbReference type="GO" id="GO:0042597">
    <property type="term" value="C:periplasmic space"/>
    <property type="evidence" value="ECO:0007669"/>
    <property type="project" value="UniProtKB-SubCell"/>
</dbReference>
<dbReference type="GO" id="GO:0055085">
    <property type="term" value="P:transmembrane transport"/>
    <property type="evidence" value="ECO:0007669"/>
    <property type="project" value="InterPro"/>
</dbReference>
<dbReference type="CDD" id="cd14748">
    <property type="entry name" value="PBP2_UgpB"/>
    <property type="match status" value="1"/>
</dbReference>
<dbReference type="Gene3D" id="3.40.190.10">
    <property type="entry name" value="Periplasmic binding protein-like II"/>
    <property type="match status" value="2"/>
</dbReference>
<dbReference type="InterPro" id="IPR050490">
    <property type="entry name" value="Bact_solute-bd_prot1"/>
</dbReference>
<dbReference type="InterPro" id="IPR006059">
    <property type="entry name" value="SBP"/>
</dbReference>
<dbReference type="InterPro" id="IPR006061">
    <property type="entry name" value="SBP_1_CS"/>
</dbReference>
<dbReference type="NCBIfam" id="NF008211">
    <property type="entry name" value="PRK10974.1"/>
    <property type="match status" value="1"/>
</dbReference>
<dbReference type="PANTHER" id="PTHR43649">
    <property type="entry name" value="ARABINOSE-BINDING PROTEIN-RELATED"/>
    <property type="match status" value="1"/>
</dbReference>
<dbReference type="PANTHER" id="PTHR43649:SF31">
    <property type="entry name" value="SN-GLYCEROL-3-PHOSPHATE-BINDING PERIPLASMIC PROTEIN UGPB"/>
    <property type="match status" value="1"/>
</dbReference>
<dbReference type="Pfam" id="PF13416">
    <property type="entry name" value="SBP_bac_8"/>
    <property type="match status" value="1"/>
</dbReference>
<dbReference type="SUPFAM" id="SSF53850">
    <property type="entry name" value="Periplasmic binding protein-like II"/>
    <property type="match status" value="1"/>
</dbReference>
<dbReference type="PROSITE" id="PS01037">
    <property type="entry name" value="SBP_BACTERIAL_1"/>
    <property type="match status" value="1"/>
</dbReference>
<gene>
    <name type="primary">ugpB</name>
    <name type="ordered locus">YPA_0228</name>
</gene>
<name>UGPB_YERPA</name>
<evidence type="ECO:0000250" key="1">
    <source>
        <dbReference type="UniProtKB" id="P0AG80"/>
    </source>
</evidence>
<evidence type="ECO:0000255" key="2"/>
<evidence type="ECO:0000305" key="3"/>
<protein>
    <recommendedName>
        <fullName evidence="1">sn-glycerol-3-phosphate-binding periplasmic protein UgpB</fullName>
    </recommendedName>
</protein>
<comment type="function">
    <text evidence="1">Part of the ABC transporter complex UgpBAEC involved in sn-glycerol-3-phosphate (G3P) import. Binds G3P.</text>
</comment>
<comment type="subunit">
    <text evidence="1">The complex is composed of two ATP-binding proteins (UgpC), two transmembrane proteins (UgpA and UgpE) and a solute-binding protein (UgpB).</text>
</comment>
<comment type="subcellular location">
    <subcellularLocation>
        <location evidence="1">Periplasm</location>
    </subcellularLocation>
</comment>
<comment type="similarity">
    <text evidence="3">Belongs to the bacterial solute-binding protein 1 family.</text>
</comment>
<feature type="signal peptide" evidence="2">
    <location>
        <begin position="1"/>
        <end position="25"/>
    </location>
</feature>
<feature type="chain" id="PRO_5000115744" description="sn-glycerol-3-phosphate-binding periplasmic protein UgpB">
    <location>
        <begin position="26"/>
        <end position="439"/>
    </location>
</feature>
<feature type="binding site" evidence="1">
    <location>
        <position position="67"/>
    </location>
    <ligand>
        <name>sn-glycerol 3-phosphate</name>
        <dbReference type="ChEBI" id="CHEBI:57597"/>
    </ligand>
</feature>
<feature type="binding site" evidence="1">
    <location>
        <position position="91"/>
    </location>
    <ligand>
        <name>sn-glycerol 3-phosphate</name>
        <dbReference type="ChEBI" id="CHEBI:57597"/>
    </ligand>
</feature>
<feature type="binding site" evidence="1">
    <location>
        <position position="146"/>
    </location>
    <ligand>
        <name>sn-glycerol 3-phosphate</name>
        <dbReference type="ChEBI" id="CHEBI:57597"/>
    </ligand>
</feature>
<feature type="binding site" evidence="1">
    <location>
        <position position="272"/>
    </location>
    <ligand>
        <name>sn-glycerol 3-phosphate</name>
        <dbReference type="ChEBI" id="CHEBI:57597"/>
    </ligand>
</feature>
<feature type="binding site" evidence="1">
    <location>
        <position position="309"/>
    </location>
    <ligand>
        <name>sn-glycerol 3-phosphate</name>
        <dbReference type="ChEBI" id="CHEBI:57597"/>
    </ligand>
</feature>
<feature type="binding site" evidence="1">
    <location>
        <position position="348"/>
    </location>
    <ligand>
        <name>sn-glycerol 3-phosphate</name>
        <dbReference type="ChEBI" id="CHEBI:57597"/>
    </ligand>
</feature>
<feature type="binding site" evidence="1">
    <location>
        <position position="399"/>
    </location>
    <ligand>
        <name>sn-glycerol 3-phosphate</name>
        <dbReference type="ChEBI" id="CHEBI:57597"/>
    </ligand>
</feature>
<accession>Q1CBH5</accession>
<sequence length="439" mass="48574">MFNNSIHKVSICIALTLTFSANAMAVTEIPFWHSMEGELGKEVDSIADRFNQSQPDYKIVPVYKGNYEQSLAAGIAAFRSGKAPAILQVYEVGTATMMASKAIKPVYQVFKDANIDFDESVFVPTVAGYYTDSKTGRLLSQPFNSSTPVLYYNKEAFKKAGLDPEQPPKTWQELAADTAKLRAAGSSCGYASGWQGWIQIENFSAWHGQPIASRNNGFDGTDAVLEFNKPLQVKHIQLLSDMNKKGDFTYFGRKDESTSKFYNGDCAITTASSGSLASIRHYAKFNFGVGMMPYDADAKNAPQNAIIGGASLWVMDGKDKETYKGVAEFLQYLVKPEIAAEWHQKTGYLPITTAAYELTKQQGFYEQNPGADVATRQMLNKPPLPYTKGLRLGNMPQIRTVVDEELEAVWTAKKTPQAALDNSVKRGDVLLRRFEQANK</sequence>
<organism>
    <name type="scientific">Yersinia pestis bv. Antiqua (strain Antiqua)</name>
    <dbReference type="NCBI Taxonomy" id="360102"/>
    <lineage>
        <taxon>Bacteria</taxon>
        <taxon>Pseudomonadati</taxon>
        <taxon>Pseudomonadota</taxon>
        <taxon>Gammaproteobacteria</taxon>
        <taxon>Enterobacterales</taxon>
        <taxon>Yersiniaceae</taxon>
        <taxon>Yersinia</taxon>
    </lineage>
</organism>
<proteinExistence type="inferred from homology"/>
<reference key="1">
    <citation type="journal article" date="2006" name="J. Bacteriol.">
        <title>Complete genome sequence of Yersinia pestis strains Antiqua and Nepal516: evidence of gene reduction in an emerging pathogen.</title>
        <authorList>
            <person name="Chain P.S.G."/>
            <person name="Hu P."/>
            <person name="Malfatti S.A."/>
            <person name="Radnedge L."/>
            <person name="Larimer F."/>
            <person name="Vergez L.M."/>
            <person name="Worsham P."/>
            <person name="Chu M.C."/>
            <person name="Andersen G.L."/>
        </authorList>
    </citation>
    <scope>NUCLEOTIDE SEQUENCE [LARGE SCALE GENOMIC DNA]</scope>
    <source>
        <strain>Antiqua</strain>
    </source>
</reference>
<keyword id="KW-0574">Periplasm</keyword>
<keyword id="KW-0732">Signal</keyword>
<keyword id="KW-0813">Transport</keyword>